<protein>
    <recommendedName>
        <fullName>Insulin</fullName>
    </recommendedName>
    <component>
        <recommendedName>
            <fullName>Insulin B chain</fullName>
        </recommendedName>
    </component>
    <component>
        <recommendedName>
            <fullName>Insulin A chain</fullName>
        </recommendedName>
    </component>
</protein>
<keyword id="KW-0119">Carbohydrate metabolism</keyword>
<keyword id="KW-0903">Direct protein sequencing</keyword>
<keyword id="KW-1015">Disulfide bond</keyword>
<keyword id="KW-0313">Glucose metabolism</keyword>
<keyword id="KW-0372">Hormone</keyword>
<keyword id="KW-0964">Secreted</keyword>
<gene>
    <name type="primary">INS</name>
</gene>
<evidence type="ECO:0000305" key="1"/>
<comment type="function">
    <text>Insulin decreases blood glucose concentration. It increases cell permeability to monosaccharides, amino acids and fatty acids. It accelerates glycolysis, the pentose phosphate cycle, and glycogen synthesis in liver.</text>
</comment>
<comment type="subunit">
    <text>Heterodimer of a B chain and an A chain linked by two disulfide bonds.</text>
</comment>
<comment type="subcellular location">
    <subcellularLocation>
        <location>Secreted</location>
    </subcellularLocation>
</comment>
<comment type="similarity">
    <text evidence="1">Belongs to the insulin family.</text>
</comment>
<accession>P67971</accession>
<accession>P10604</accession>
<sequence length="51" mass="5747">FVNQHLCGPHLVEALYLVCGERGFFYAPKTGVVDQCCTSICSLYQLQNYCN</sequence>
<organism>
    <name type="scientific">Saimiri sciureus</name>
    <name type="common">Common squirrel monkey</name>
    <dbReference type="NCBI Taxonomy" id="9521"/>
    <lineage>
        <taxon>Eukaryota</taxon>
        <taxon>Metazoa</taxon>
        <taxon>Chordata</taxon>
        <taxon>Craniata</taxon>
        <taxon>Vertebrata</taxon>
        <taxon>Euteleostomi</taxon>
        <taxon>Mammalia</taxon>
        <taxon>Eutheria</taxon>
        <taxon>Euarchontoglires</taxon>
        <taxon>Primates</taxon>
        <taxon>Haplorrhini</taxon>
        <taxon>Platyrrhini</taxon>
        <taxon>Cebidae</taxon>
        <taxon>Saimiriinae</taxon>
        <taxon>Saimiri</taxon>
    </lineage>
</organism>
<proteinExistence type="evidence at protein level"/>
<reference key="1">
    <citation type="journal article" date="1990" name="Proc. Natl. Acad. Sci. U.S.A.">
        <title>Isolation and amino acid sequences of squirrel monkey (Saimiri sciurea) insulin and glucagon.</title>
        <authorList>
            <person name="Yu J.-H."/>
            <person name="Eng J."/>
            <person name="Yalow R.S."/>
        </authorList>
    </citation>
    <scope>PROTEIN SEQUENCE</scope>
</reference>
<feature type="peptide" id="PRO_0000015904" description="Insulin B chain">
    <location>
        <begin position="1"/>
        <end position="30"/>
    </location>
</feature>
<feature type="peptide" id="PRO_0000015905" description="Insulin A chain">
    <location>
        <begin position="31"/>
        <end position="51"/>
    </location>
</feature>
<feature type="disulfide bond" description="Interchain (between B and A chains)">
    <location>
        <begin position="7"/>
        <end position="37"/>
    </location>
</feature>
<feature type="disulfide bond" description="Interchain (between B and A chains)">
    <location>
        <begin position="19"/>
        <end position="50"/>
    </location>
</feature>
<feature type="disulfide bond">
    <location>
        <begin position="36"/>
        <end position="41"/>
    </location>
</feature>
<feature type="non-consecutive residues" evidence="1">
    <location>
        <begin position="30"/>
        <end position="31"/>
    </location>
</feature>
<name>INS_SAISC</name>
<dbReference type="SMR" id="P67971"/>
<dbReference type="GO" id="GO:0005615">
    <property type="term" value="C:extracellular space"/>
    <property type="evidence" value="ECO:0007669"/>
    <property type="project" value="TreeGrafter"/>
</dbReference>
<dbReference type="GO" id="GO:0005179">
    <property type="term" value="F:hormone activity"/>
    <property type="evidence" value="ECO:0007669"/>
    <property type="project" value="UniProtKB-KW"/>
</dbReference>
<dbReference type="GO" id="GO:0005158">
    <property type="term" value="F:insulin receptor binding"/>
    <property type="evidence" value="ECO:0007669"/>
    <property type="project" value="TreeGrafter"/>
</dbReference>
<dbReference type="GO" id="GO:1901701">
    <property type="term" value="P:cellular response to oxygen-containing compound"/>
    <property type="evidence" value="ECO:0007669"/>
    <property type="project" value="UniProtKB-ARBA"/>
</dbReference>
<dbReference type="GO" id="GO:0042593">
    <property type="term" value="P:glucose homeostasis"/>
    <property type="evidence" value="ECO:0007669"/>
    <property type="project" value="TreeGrafter"/>
</dbReference>
<dbReference type="GO" id="GO:0006006">
    <property type="term" value="P:glucose metabolic process"/>
    <property type="evidence" value="ECO:0007669"/>
    <property type="project" value="UniProtKB-KW"/>
</dbReference>
<dbReference type="GO" id="GO:0050714">
    <property type="term" value="P:positive regulation of protein secretion"/>
    <property type="evidence" value="ECO:0007669"/>
    <property type="project" value="TreeGrafter"/>
</dbReference>
<dbReference type="CDD" id="cd04367">
    <property type="entry name" value="IlGF_insulin_like"/>
    <property type="match status" value="1"/>
</dbReference>
<dbReference type="Gene3D" id="1.10.100.10">
    <property type="entry name" value="Insulin-like"/>
    <property type="match status" value="2"/>
</dbReference>
<dbReference type="InterPro" id="IPR004825">
    <property type="entry name" value="Insulin"/>
</dbReference>
<dbReference type="InterPro" id="IPR016179">
    <property type="entry name" value="Insulin-like"/>
</dbReference>
<dbReference type="InterPro" id="IPR036438">
    <property type="entry name" value="Insulin-like_sf"/>
</dbReference>
<dbReference type="InterPro" id="IPR022353">
    <property type="entry name" value="Insulin_CS"/>
</dbReference>
<dbReference type="InterPro" id="IPR022352">
    <property type="entry name" value="Insulin_family"/>
</dbReference>
<dbReference type="PANTHER" id="PTHR11454:SF9">
    <property type="entry name" value="INSULIN"/>
    <property type="match status" value="1"/>
</dbReference>
<dbReference type="PANTHER" id="PTHR11454">
    <property type="entry name" value="INSULIN/INSULIN GROWTH FACTOR"/>
    <property type="match status" value="1"/>
</dbReference>
<dbReference type="Pfam" id="PF00049">
    <property type="entry name" value="Insulin"/>
    <property type="match status" value="1"/>
</dbReference>
<dbReference type="PRINTS" id="PR00277">
    <property type="entry name" value="INSULIN"/>
</dbReference>
<dbReference type="PRINTS" id="PR00276">
    <property type="entry name" value="INSULINFAMLY"/>
</dbReference>
<dbReference type="SMART" id="SM00078">
    <property type="entry name" value="IlGF"/>
    <property type="match status" value="1"/>
</dbReference>
<dbReference type="SUPFAM" id="SSF56994">
    <property type="entry name" value="Insulin-like"/>
    <property type="match status" value="1"/>
</dbReference>
<dbReference type="PROSITE" id="PS00262">
    <property type="entry name" value="INSULIN"/>
    <property type="match status" value="1"/>
</dbReference>